<sequence length="150" mass="16695">MSGSMATAEASGSDGKGQEVETSVTYYRLEEVAKRNSLKELWLVIHGRVYDVTRFLNEHPGGEEVLLEQAGVDASESFEDVGHSSDAREMLKQYYIGDIHPSDLKPESGSKDPSKNDTCKSCWAYWILPIIGAVLLGFLYRYYTSESKSS</sequence>
<name>CYB5B_HUMAN</name>
<gene>
    <name type="primary">CYB5B</name>
    <name type="synonym">CYB5M</name>
    <name type="synonym">OMB5</name>
</gene>
<proteinExistence type="evidence at protein level"/>
<evidence type="ECO:0000250" key="1"/>
<evidence type="ECO:0000250" key="2">
    <source>
        <dbReference type="UniProtKB" id="P04166"/>
    </source>
</evidence>
<evidence type="ECO:0000250" key="3">
    <source>
        <dbReference type="UniProtKB" id="Q9CQX2"/>
    </source>
</evidence>
<evidence type="ECO:0000255" key="4"/>
<evidence type="ECO:0000255" key="5">
    <source>
        <dbReference type="PROSITE-ProRule" id="PRU00279"/>
    </source>
</evidence>
<evidence type="ECO:0000256" key="6">
    <source>
        <dbReference type="SAM" id="MobiDB-lite"/>
    </source>
</evidence>
<evidence type="ECO:0000305" key="7"/>
<evidence type="ECO:0007744" key="8">
    <source>
    </source>
</evidence>
<evidence type="ECO:0007744" key="9">
    <source>
    </source>
</evidence>
<evidence type="ECO:0007744" key="10">
    <source>
    </source>
</evidence>
<evidence type="ECO:0007829" key="11">
    <source>
        <dbReference type="PDB" id="3NER"/>
    </source>
</evidence>
<reference key="1">
    <citation type="submission" date="1997-11" db="EMBL/GenBank/DDBJ databases">
        <title>Cytochrome b5 and aquaporins share the last transmembrane amino acids sequence.</title>
        <authorList>
            <person name="Ishibashi K."/>
        </authorList>
    </citation>
    <scope>NUCLEOTIDE SEQUENCE [MRNA]</scope>
    <source>
        <tissue>Testis</tissue>
    </source>
</reference>
<reference key="2">
    <citation type="journal article" date="2004" name="Nat. Genet.">
        <title>Complete sequencing and characterization of 21,243 full-length human cDNAs.</title>
        <authorList>
            <person name="Ota T."/>
            <person name="Suzuki Y."/>
            <person name="Nishikawa T."/>
            <person name="Otsuki T."/>
            <person name="Sugiyama T."/>
            <person name="Irie R."/>
            <person name="Wakamatsu A."/>
            <person name="Hayashi K."/>
            <person name="Sato H."/>
            <person name="Nagai K."/>
            <person name="Kimura K."/>
            <person name="Makita H."/>
            <person name="Sekine M."/>
            <person name="Obayashi M."/>
            <person name="Nishi T."/>
            <person name="Shibahara T."/>
            <person name="Tanaka T."/>
            <person name="Ishii S."/>
            <person name="Yamamoto J."/>
            <person name="Saito K."/>
            <person name="Kawai Y."/>
            <person name="Isono Y."/>
            <person name="Nakamura Y."/>
            <person name="Nagahari K."/>
            <person name="Murakami K."/>
            <person name="Yasuda T."/>
            <person name="Iwayanagi T."/>
            <person name="Wagatsuma M."/>
            <person name="Shiratori A."/>
            <person name="Sudo H."/>
            <person name="Hosoiri T."/>
            <person name="Kaku Y."/>
            <person name="Kodaira H."/>
            <person name="Kondo H."/>
            <person name="Sugawara M."/>
            <person name="Takahashi M."/>
            <person name="Kanda K."/>
            <person name="Yokoi T."/>
            <person name="Furuya T."/>
            <person name="Kikkawa E."/>
            <person name="Omura Y."/>
            <person name="Abe K."/>
            <person name="Kamihara K."/>
            <person name="Katsuta N."/>
            <person name="Sato K."/>
            <person name="Tanikawa M."/>
            <person name="Yamazaki M."/>
            <person name="Ninomiya K."/>
            <person name="Ishibashi T."/>
            <person name="Yamashita H."/>
            <person name="Murakawa K."/>
            <person name="Fujimori K."/>
            <person name="Tanai H."/>
            <person name="Kimata M."/>
            <person name="Watanabe M."/>
            <person name="Hiraoka S."/>
            <person name="Chiba Y."/>
            <person name="Ishida S."/>
            <person name="Ono Y."/>
            <person name="Takiguchi S."/>
            <person name="Watanabe S."/>
            <person name="Yosida M."/>
            <person name="Hotuta T."/>
            <person name="Kusano J."/>
            <person name="Kanehori K."/>
            <person name="Takahashi-Fujii A."/>
            <person name="Hara H."/>
            <person name="Tanase T.-O."/>
            <person name="Nomura Y."/>
            <person name="Togiya S."/>
            <person name="Komai F."/>
            <person name="Hara R."/>
            <person name="Takeuchi K."/>
            <person name="Arita M."/>
            <person name="Imose N."/>
            <person name="Musashino K."/>
            <person name="Yuuki H."/>
            <person name="Oshima A."/>
            <person name="Sasaki N."/>
            <person name="Aotsuka S."/>
            <person name="Yoshikawa Y."/>
            <person name="Matsunawa H."/>
            <person name="Ichihara T."/>
            <person name="Shiohata N."/>
            <person name="Sano S."/>
            <person name="Moriya S."/>
            <person name="Momiyama H."/>
            <person name="Satoh N."/>
            <person name="Takami S."/>
            <person name="Terashima Y."/>
            <person name="Suzuki O."/>
            <person name="Nakagawa S."/>
            <person name="Senoh A."/>
            <person name="Mizoguchi H."/>
            <person name="Goto Y."/>
            <person name="Shimizu F."/>
            <person name="Wakebe H."/>
            <person name="Hishigaki H."/>
            <person name="Watanabe T."/>
            <person name="Sugiyama A."/>
            <person name="Takemoto M."/>
            <person name="Kawakami B."/>
            <person name="Yamazaki M."/>
            <person name="Watanabe K."/>
            <person name="Kumagai A."/>
            <person name="Itakura S."/>
            <person name="Fukuzumi Y."/>
            <person name="Fujimori Y."/>
            <person name="Komiyama M."/>
            <person name="Tashiro H."/>
            <person name="Tanigami A."/>
            <person name="Fujiwara T."/>
            <person name="Ono T."/>
            <person name="Yamada K."/>
            <person name="Fujii Y."/>
            <person name="Ozaki K."/>
            <person name="Hirao M."/>
            <person name="Ohmori Y."/>
            <person name="Kawabata A."/>
            <person name="Hikiji T."/>
            <person name="Kobatake N."/>
            <person name="Inagaki H."/>
            <person name="Ikema Y."/>
            <person name="Okamoto S."/>
            <person name="Okitani R."/>
            <person name="Kawakami T."/>
            <person name="Noguchi S."/>
            <person name="Itoh T."/>
            <person name="Shigeta K."/>
            <person name="Senba T."/>
            <person name="Matsumura K."/>
            <person name="Nakajima Y."/>
            <person name="Mizuno T."/>
            <person name="Morinaga M."/>
            <person name="Sasaki M."/>
            <person name="Togashi T."/>
            <person name="Oyama M."/>
            <person name="Hata H."/>
            <person name="Watanabe M."/>
            <person name="Komatsu T."/>
            <person name="Mizushima-Sugano J."/>
            <person name="Satoh T."/>
            <person name="Shirai Y."/>
            <person name="Takahashi Y."/>
            <person name="Nakagawa K."/>
            <person name="Okumura K."/>
            <person name="Nagase T."/>
            <person name="Nomura N."/>
            <person name="Kikuchi H."/>
            <person name="Masuho Y."/>
            <person name="Yamashita R."/>
            <person name="Nakai K."/>
            <person name="Yada T."/>
            <person name="Nakamura Y."/>
            <person name="Ohara O."/>
            <person name="Isogai T."/>
            <person name="Sugano S."/>
        </authorList>
    </citation>
    <scope>NUCLEOTIDE SEQUENCE [LARGE SCALE MRNA]</scope>
    <source>
        <tissue>Placenta</tissue>
    </source>
</reference>
<reference key="3">
    <citation type="journal article" date="2004" name="Nature">
        <title>The sequence and analysis of duplication-rich human chromosome 16.</title>
        <authorList>
            <person name="Martin J."/>
            <person name="Han C."/>
            <person name="Gordon L.A."/>
            <person name="Terry A."/>
            <person name="Prabhakar S."/>
            <person name="She X."/>
            <person name="Xie G."/>
            <person name="Hellsten U."/>
            <person name="Chan Y.M."/>
            <person name="Altherr M."/>
            <person name="Couronne O."/>
            <person name="Aerts A."/>
            <person name="Bajorek E."/>
            <person name="Black S."/>
            <person name="Blumer H."/>
            <person name="Branscomb E."/>
            <person name="Brown N.C."/>
            <person name="Bruno W.J."/>
            <person name="Buckingham J.M."/>
            <person name="Callen D.F."/>
            <person name="Campbell C.S."/>
            <person name="Campbell M.L."/>
            <person name="Campbell E.W."/>
            <person name="Caoile C."/>
            <person name="Challacombe J.F."/>
            <person name="Chasteen L.A."/>
            <person name="Chertkov O."/>
            <person name="Chi H.C."/>
            <person name="Christensen M."/>
            <person name="Clark L.M."/>
            <person name="Cohn J.D."/>
            <person name="Denys M."/>
            <person name="Detter J.C."/>
            <person name="Dickson M."/>
            <person name="Dimitrijevic-Bussod M."/>
            <person name="Escobar J."/>
            <person name="Fawcett J.J."/>
            <person name="Flowers D."/>
            <person name="Fotopulos D."/>
            <person name="Glavina T."/>
            <person name="Gomez M."/>
            <person name="Gonzales E."/>
            <person name="Goodstein D."/>
            <person name="Goodwin L.A."/>
            <person name="Grady D.L."/>
            <person name="Grigoriev I."/>
            <person name="Groza M."/>
            <person name="Hammon N."/>
            <person name="Hawkins T."/>
            <person name="Haydu L."/>
            <person name="Hildebrand C.E."/>
            <person name="Huang W."/>
            <person name="Israni S."/>
            <person name="Jett J."/>
            <person name="Jewett P.B."/>
            <person name="Kadner K."/>
            <person name="Kimball H."/>
            <person name="Kobayashi A."/>
            <person name="Krawczyk M.-C."/>
            <person name="Leyba T."/>
            <person name="Longmire J.L."/>
            <person name="Lopez F."/>
            <person name="Lou Y."/>
            <person name="Lowry S."/>
            <person name="Ludeman T."/>
            <person name="Manohar C.F."/>
            <person name="Mark G.A."/>
            <person name="McMurray K.L."/>
            <person name="Meincke L.J."/>
            <person name="Morgan J."/>
            <person name="Moyzis R.K."/>
            <person name="Mundt M.O."/>
            <person name="Munk A.C."/>
            <person name="Nandkeshwar R.D."/>
            <person name="Pitluck S."/>
            <person name="Pollard M."/>
            <person name="Predki P."/>
            <person name="Parson-Quintana B."/>
            <person name="Ramirez L."/>
            <person name="Rash S."/>
            <person name="Retterer J."/>
            <person name="Ricke D.O."/>
            <person name="Robinson D.L."/>
            <person name="Rodriguez A."/>
            <person name="Salamov A."/>
            <person name="Saunders E.H."/>
            <person name="Scott D."/>
            <person name="Shough T."/>
            <person name="Stallings R.L."/>
            <person name="Stalvey M."/>
            <person name="Sutherland R.D."/>
            <person name="Tapia R."/>
            <person name="Tesmer J.G."/>
            <person name="Thayer N."/>
            <person name="Thompson L.S."/>
            <person name="Tice H."/>
            <person name="Torney D.C."/>
            <person name="Tran-Gyamfi M."/>
            <person name="Tsai M."/>
            <person name="Ulanovsky L.E."/>
            <person name="Ustaszewska A."/>
            <person name="Vo N."/>
            <person name="White P.S."/>
            <person name="Williams A.L."/>
            <person name="Wills P.L."/>
            <person name="Wu J.-R."/>
            <person name="Wu K."/>
            <person name="Yang J."/>
            <person name="DeJong P."/>
            <person name="Bruce D."/>
            <person name="Doggett N.A."/>
            <person name="Deaven L."/>
            <person name="Schmutz J."/>
            <person name="Grimwood J."/>
            <person name="Richardson P."/>
            <person name="Rokhsar D.S."/>
            <person name="Eichler E.E."/>
            <person name="Gilna P."/>
            <person name="Lucas S.M."/>
            <person name="Myers R.M."/>
            <person name="Rubin E.M."/>
            <person name="Pennacchio L.A."/>
        </authorList>
    </citation>
    <scope>NUCLEOTIDE SEQUENCE [LARGE SCALE GENOMIC DNA]</scope>
</reference>
<reference key="4">
    <citation type="submission" date="2005-07" db="EMBL/GenBank/DDBJ databases">
        <authorList>
            <person name="Mural R.J."/>
            <person name="Istrail S."/>
            <person name="Sutton G.G."/>
            <person name="Florea L."/>
            <person name="Halpern A.L."/>
            <person name="Mobarry C.M."/>
            <person name="Lippert R."/>
            <person name="Walenz B."/>
            <person name="Shatkay H."/>
            <person name="Dew I."/>
            <person name="Miller J.R."/>
            <person name="Flanigan M.J."/>
            <person name="Edwards N.J."/>
            <person name="Bolanos R."/>
            <person name="Fasulo D."/>
            <person name="Halldorsson B.V."/>
            <person name="Hannenhalli S."/>
            <person name="Turner R."/>
            <person name="Yooseph S."/>
            <person name="Lu F."/>
            <person name="Nusskern D.R."/>
            <person name="Shue B.C."/>
            <person name="Zheng X.H."/>
            <person name="Zhong F."/>
            <person name="Delcher A.L."/>
            <person name="Huson D.H."/>
            <person name="Kravitz S.A."/>
            <person name="Mouchard L."/>
            <person name="Reinert K."/>
            <person name="Remington K.A."/>
            <person name="Clark A.G."/>
            <person name="Waterman M.S."/>
            <person name="Eichler E.E."/>
            <person name="Adams M.D."/>
            <person name="Hunkapiller M.W."/>
            <person name="Myers E.W."/>
            <person name="Venter J.C."/>
        </authorList>
    </citation>
    <scope>NUCLEOTIDE SEQUENCE [LARGE SCALE GENOMIC DNA]</scope>
</reference>
<reference key="5">
    <citation type="journal article" date="2004" name="Genome Res.">
        <title>The status, quality, and expansion of the NIH full-length cDNA project: the Mammalian Gene Collection (MGC).</title>
        <authorList>
            <consortium name="The MGC Project Team"/>
        </authorList>
    </citation>
    <scope>NUCLEOTIDE SEQUENCE [LARGE SCALE MRNA]</scope>
    <source>
        <tissue>Lymph</tissue>
        <tissue>Pancreas</tissue>
    </source>
</reference>
<reference key="6">
    <citation type="journal article" date="2008" name="Proc. Natl. Acad. Sci. U.S.A.">
        <title>A quantitative atlas of mitotic phosphorylation.</title>
        <authorList>
            <person name="Dephoure N."/>
            <person name="Zhou C."/>
            <person name="Villen J."/>
            <person name="Beausoleil S.A."/>
            <person name="Bakalarski C.E."/>
            <person name="Elledge S.J."/>
            <person name="Gygi S.P."/>
        </authorList>
    </citation>
    <scope>IDENTIFICATION BY MASS SPECTROMETRY [LARGE SCALE ANALYSIS]</scope>
    <source>
        <tissue>Cervix carcinoma</tissue>
    </source>
</reference>
<reference key="7">
    <citation type="journal article" date="2009" name="Science">
        <title>Lysine acetylation targets protein complexes and co-regulates major cellular functions.</title>
        <authorList>
            <person name="Choudhary C."/>
            <person name="Kumar C."/>
            <person name="Gnad F."/>
            <person name="Nielsen M.L."/>
            <person name="Rehman M."/>
            <person name="Walther T.C."/>
            <person name="Olsen J.V."/>
            <person name="Mann M."/>
        </authorList>
    </citation>
    <scope>ACETYLATION [LARGE SCALE ANALYSIS] AT LYS-34</scope>
    <scope>IDENTIFICATION BY MASS SPECTROMETRY [LARGE SCALE ANALYSIS]</scope>
</reference>
<reference key="8">
    <citation type="journal article" date="2011" name="BMC Syst. Biol.">
        <title>Initial characterization of the human central proteome.</title>
        <authorList>
            <person name="Burkard T.R."/>
            <person name="Planyavsky M."/>
            <person name="Kaupe I."/>
            <person name="Breitwieser F.P."/>
            <person name="Buerckstuemmer T."/>
            <person name="Bennett K.L."/>
            <person name="Superti-Furga G."/>
            <person name="Colinge J."/>
        </authorList>
    </citation>
    <scope>IDENTIFICATION BY MASS SPECTROMETRY [LARGE SCALE ANALYSIS]</scope>
</reference>
<reference key="9">
    <citation type="journal article" date="2012" name="Proc. Natl. Acad. Sci. U.S.A.">
        <title>N-terminal acetylome analyses and functional insights of the N-terminal acetyltransferase NatB.</title>
        <authorList>
            <person name="Van Damme P."/>
            <person name="Lasa M."/>
            <person name="Polevoda B."/>
            <person name="Gazquez C."/>
            <person name="Elosegui-Artola A."/>
            <person name="Kim D.S."/>
            <person name="De Juan-Pardo E."/>
            <person name="Demeyer K."/>
            <person name="Hole K."/>
            <person name="Larrea E."/>
            <person name="Timmerman E."/>
            <person name="Prieto J."/>
            <person name="Arnesen T."/>
            <person name="Sherman F."/>
            <person name="Gevaert K."/>
            <person name="Aldabe R."/>
        </authorList>
    </citation>
    <scope>IDENTIFICATION BY MASS SPECTROMETRY [LARGE SCALE ANALYSIS]</scope>
</reference>
<reference key="10">
    <citation type="journal article" date="2013" name="J. Proteome Res.">
        <title>Toward a comprehensive characterization of a human cancer cell phosphoproteome.</title>
        <authorList>
            <person name="Zhou H."/>
            <person name="Di Palma S."/>
            <person name="Preisinger C."/>
            <person name="Peng M."/>
            <person name="Polat A.N."/>
            <person name="Heck A.J."/>
            <person name="Mohammed S."/>
        </authorList>
    </citation>
    <scope>PHOSPHORYLATION [LARGE SCALE ANALYSIS] AT SER-23</scope>
    <scope>IDENTIFICATION BY MASS SPECTROMETRY [LARGE SCALE ANALYSIS]</scope>
    <source>
        <tissue>Cervix carcinoma</tissue>
    </source>
</reference>
<reference key="11">
    <citation type="journal article" date="2014" name="J. Proteomics">
        <title>An enzyme assisted RP-RPLC approach for in-depth analysis of human liver phosphoproteome.</title>
        <authorList>
            <person name="Bian Y."/>
            <person name="Song C."/>
            <person name="Cheng K."/>
            <person name="Dong M."/>
            <person name="Wang F."/>
            <person name="Huang J."/>
            <person name="Sun D."/>
            <person name="Wang L."/>
            <person name="Ye M."/>
            <person name="Zou H."/>
        </authorList>
    </citation>
    <scope>IDENTIFICATION BY MASS SPECTROMETRY [LARGE SCALE ANALYSIS]</scope>
    <source>
        <tissue>Liver</tissue>
    </source>
</reference>
<reference key="12">
    <citation type="journal article" date="2014" name="Mol. Cell. Proteomics">
        <title>Immunoaffinity enrichment and mass spectrometry analysis of protein methylation.</title>
        <authorList>
            <person name="Guo A."/>
            <person name="Gu H."/>
            <person name="Zhou J."/>
            <person name="Mulhern D."/>
            <person name="Wang Y."/>
            <person name="Lee K.A."/>
            <person name="Yang V."/>
            <person name="Aguiar M."/>
            <person name="Kornhauser J."/>
            <person name="Jia X."/>
            <person name="Ren J."/>
            <person name="Beausoleil S.A."/>
            <person name="Silva J.C."/>
            <person name="Vemulapalli V."/>
            <person name="Bedford M.T."/>
            <person name="Comb M.J."/>
        </authorList>
    </citation>
    <scope>METHYLATION [LARGE SCALE ANALYSIS] AT LYS-39</scope>
    <scope>IDENTIFICATION BY MASS SPECTROMETRY [LARGE SCALE ANALYSIS]</scope>
    <source>
        <tissue>Colon carcinoma</tissue>
    </source>
</reference>
<reference key="13">
    <citation type="journal article" date="2015" name="Proteomics">
        <title>N-terminome analysis of the human mitochondrial proteome.</title>
        <authorList>
            <person name="Vaca Jacome A.S."/>
            <person name="Rabilloud T."/>
            <person name="Schaeffer-Reiss C."/>
            <person name="Rompais M."/>
            <person name="Ayoub D."/>
            <person name="Lane L."/>
            <person name="Bairoch A."/>
            <person name="Van Dorsselaer A."/>
            <person name="Carapito C."/>
        </authorList>
    </citation>
    <scope>IDENTIFICATION BY MASS SPECTROMETRY [LARGE SCALE ANALYSIS]</scope>
</reference>
<keyword id="KW-0002">3D-structure</keyword>
<keyword id="KW-0007">Acetylation</keyword>
<keyword id="KW-0249">Electron transport</keyword>
<keyword id="KW-0349">Heme</keyword>
<keyword id="KW-0408">Iron</keyword>
<keyword id="KW-0472">Membrane</keyword>
<keyword id="KW-0479">Metal-binding</keyword>
<keyword id="KW-0488">Methylation</keyword>
<keyword id="KW-0496">Mitochondrion</keyword>
<keyword id="KW-1000">Mitochondrion outer membrane</keyword>
<keyword id="KW-0597">Phosphoprotein</keyword>
<keyword id="KW-1267">Proteomics identification</keyword>
<keyword id="KW-1185">Reference proteome</keyword>
<keyword id="KW-0812">Transmembrane</keyword>
<keyword id="KW-1133">Transmembrane helix</keyword>
<keyword id="KW-0813">Transport</keyword>
<feature type="propeptide" id="PRO_0000006471" evidence="2">
    <location>
        <begin position="1"/>
        <end position="15"/>
    </location>
</feature>
<feature type="chain" id="PRO_0000006472" description="Cytochrome b5 type B">
    <location>
        <begin position="16"/>
        <end position="150"/>
    </location>
</feature>
<feature type="transmembrane region" description="Helical" evidence="4">
    <location>
        <begin position="123"/>
        <end position="140"/>
    </location>
</feature>
<feature type="domain" description="Cytochrome b5 heme-binding" evidence="5">
    <location>
        <begin position="24"/>
        <end position="100"/>
    </location>
</feature>
<feature type="region of interest" description="Disordered" evidence="6">
    <location>
        <begin position="1"/>
        <end position="20"/>
    </location>
</feature>
<feature type="binding site" description="axial binding residue" evidence="5">
    <location>
        <position position="59"/>
    </location>
    <ligand>
        <name>heme</name>
        <dbReference type="ChEBI" id="CHEBI:30413"/>
    </ligand>
    <ligandPart>
        <name>Fe</name>
        <dbReference type="ChEBI" id="CHEBI:18248"/>
    </ligandPart>
</feature>
<feature type="binding site" description="axial binding residue" evidence="5">
    <location>
        <position position="83"/>
    </location>
    <ligand>
        <name>heme</name>
        <dbReference type="ChEBI" id="CHEBI:30413"/>
    </ligand>
    <ligandPart>
        <name>Fe</name>
        <dbReference type="ChEBI" id="CHEBI:18248"/>
    </ligandPart>
</feature>
<feature type="modified residue" description="Phosphoserine" evidence="9">
    <location>
        <position position="23"/>
    </location>
</feature>
<feature type="modified residue" description="N6-acetyllysine" evidence="8">
    <location>
        <position position="34"/>
    </location>
</feature>
<feature type="modified residue" description="Phosphoserine" evidence="3">
    <location>
        <position position="37"/>
    </location>
</feature>
<feature type="modified residue" description="N6-methyllysine" evidence="10">
    <location>
        <position position="39"/>
    </location>
</feature>
<feature type="modified residue" description="Phosphoserine" evidence="3">
    <location>
        <position position="84"/>
    </location>
</feature>
<feature type="sequence conflict" description="In Ref. 1; BAA23735." evidence="7" ref="1">
    <original>K</original>
    <variation>Q</variation>
    <location>
        <position position="115"/>
    </location>
</feature>
<feature type="helix" evidence="11">
    <location>
        <begin position="29"/>
        <end position="32"/>
    </location>
</feature>
<feature type="strand" evidence="11">
    <location>
        <begin position="40"/>
        <end position="45"/>
    </location>
</feature>
<feature type="strand" evidence="11">
    <location>
        <begin position="48"/>
        <end position="51"/>
    </location>
</feature>
<feature type="helix" evidence="11">
    <location>
        <begin position="53"/>
        <end position="55"/>
    </location>
</feature>
<feature type="turn" evidence="11">
    <location>
        <begin position="56"/>
        <end position="58"/>
    </location>
</feature>
<feature type="helix" evidence="11">
    <location>
        <begin position="64"/>
        <end position="67"/>
    </location>
</feature>
<feature type="turn" evidence="11">
    <location>
        <begin position="68"/>
        <end position="71"/>
    </location>
</feature>
<feature type="helix" evidence="11">
    <location>
        <begin position="75"/>
        <end position="80"/>
    </location>
</feature>
<feature type="helix" evidence="11">
    <location>
        <begin position="85"/>
        <end position="91"/>
    </location>
</feature>
<feature type="helix" evidence="11">
    <location>
        <begin position="92"/>
        <end position="94"/>
    </location>
</feature>
<feature type="strand" evidence="11">
    <location>
        <begin position="95"/>
        <end position="99"/>
    </location>
</feature>
<feature type="helix" evidence="11">
    <location>
        <begin position="101"/>
        <end position="103"/>
    </location>
</feature>
<protein>
    <recommendedName>
        <fullName>Cytochrome b5 type B</fullName>
    </recommendedName>
    <alternativeName>
        <fullName>Cytochrome b5 outer mitochondrial membrane isoform</fullName>
    </alternativeName>
</protein>
<accession>O43169</accession>
<accession>A8K6B1</accession>
<accession>J3KNF8</accession>
<accession>Q96CC3</accession>
<accession>Q9BT35</accession>
<dbReference type="EMBL" id="AB009282">
    <property type="protein sequence ID" value="BAA23735.1"/>
    <property type="status" value="ALT_INIT"/>
    <property type="molecule type" value="mRNA"/>
</dbReference>
<dbReference type="EMBL" id="AK291576">
    <property type="protein sequence ID" value="BAF84265.1"/>
    <property type="status" value="ALT_INIT"/>
    <property type="molecule type" value="mRNA"/>
</dbReference>
<dbReference type="EMBL" id="AC009032">
    <property type="status" value="NOT_ANNOTATED_CDS"/>
    <property type="molecule type" value="Genomic_DNA"/>
</dbReference>
<dbReference type="EMBL" id="AC026464">
    <property type="status" value="NOT_ANNOTATED_CDS"/>
    <property type="molecule type" value="Genomic_DNA"/>
</dbReference>
<dbReference type="EMBL" id="CH471092">
    <property type="protein sequence ID" value="EAW83275.1"/>
    <property type="molecule type" value="Genomic_DNA"/>
</dbReference>
<dbReference type="EMBL" id="CH471092">
    <property type="protein sequence ID" value="EAW83276.1"/>
    <property type="molecule type" value="Genomic_DNA"/>
</dbReference>
<dbReference type="EMBL" id="BC004373">
    <property type="protein sequence ID" value="AAH04373.1"/>
    <property type="status" value="ALT_INIT"/>
    <property type="molecule type" value="mRNA"/>
</dbReference>
<dbReference type="EMBL" id="BC014431">
    <property type="protein sequence ID" value="AAH14431.2"/>
    <property type="status" value="ALT_INIT"/>
    <property type="molecule type" value="mRNA"/>
</dbReference>
<dbReference type="CCDS" id="CCDS10880.2"/>
<dbReference type="RefSeq" id="NP_085056.2">
    <property type="nucleotide sequence ID" value="NM_030579.3"/>
</dbReference>
<dbReference type="PDB" id="3NER">
    <property type="method" value="X-ray"/>
    <property type="resolution" value="1.45 A"/>
    <property type="chains" value="A/B=16-107"/>
</dbReference>
<dbReference type="PDBsum" id="3NER"/>
<dbReference type="SMR" id="O43169"/>
<dbReference type="BioGRID" id="123309">
    <property type="interactions" value="298"/>
</dbReference>
<dbReference type="FunCoup" id="O43169">
    <property type="interactions" value="2461"/>
</dbReference>
<dbReference type="IntAct" id="O43169">
    <property type="interactions" value="153"/>
</dbReference>
<dbReference type="MINT" id="O43169"/>
<dbReference type="STRING" id="9606.ENSP00000308430"/>
<dbReference type="ChEMBL" id="CHEMBL4523134"/>
<dbReference type="DrugBank" id="DB12695">
    <property type="generic name" value="Phenethyl Isothiocyanate"/>
</dbReference>
<dbReference type="GlyGen" id="O43169">
    <property type="glycosylation" value="1 site, 1 O-linked glycan (1 site)"/>
</dbReference>
<dbReference type="iPTMnet" id="O43169"/>
<dbReference type="PhosphoSitePlus" id="O43169"/>
<dbReference type="SwissPalm" id="O43169"/>
<dbReference type="BioMuta" id="CYB5B"/>
<dbReference type="jPOST" id="O43169"/>
<dbReference type="MassIVE" id="O43169"/>
<dbReference type="PaxDb" id="9606-ENSP00000308430"/>
<dbReference type="PeptideAtlas" id="O43169"/>
<dbReference type="ProteomicsDB" id="48787"/>
<dbReference type="Pumba" id="O43169"/>
<dbReference type="TopDownProteomics" id="O43169"/>
<dbReference type="Antibodypedia" id="2014">
    <property type="antibodies" value="88 antibodies from 22 providers"/>
</dbReference>
<dbReference type="DNASU" id="80777"/>
<dbReference type="Ensembl" id="ENST00000307892.13">
    <property type="protein sequence ID" value="ENSP00000308430.8"/>
    <property type="gene ID" value="ENSG00000103018.18"/>
</dbReference>
<dbReference type="GeneID" id="80777"/>
<dbReference type="KEGG" id="hsa:80777"/>
<dbReference type="MANE-Select" id="ENST00000307892.13">
    <property type="protein sequence ID" value="ENSP00000308430.8"/>
    <property type="RefSeq nucleotide sequence ID" value="NM_030579.3"/>
    <property type="RefSeq protein sequence ID" value="NP_085056.2"/>
</dbReference>
<dbReference type="UCSC" id="uc002exg.1">
    <property type="organism name" value="human"/>
</dbReference>
<dbReference type="UCSC" id="uc059wli.1">
    <property type="organism name" value="human"/>
</dbReference>
<dbReference type="AGR" id="HGNC:24374"/>
<dbReference type="CTD" id="80777"/>
<dbReference type="DisGeNET" id="80777"/>
<dbReference type="GeneCards" id="CYB5B"/>
<dbReference type="HGNC" id="HGNC:24374">
    <property type="gene designation" value="CYB5B"/>
</dbReference>
<dbReference type="HPA" id="ENSG00000103018">
    <property type="expression patterns" value="Tissue enriched (adrenal)"/>
</dbReference>
<dbReference type="MIM" id="611964">
    <property type="type" value="gene"/>
</dbReference>
<dbReference type="neXtProt" id="NX_O43169"/>
<dbReference type="OpenTargets" id="ENSG00000103018"/>
<dbReference type="PharmGKB" id="PA143485445"/>
<dbReference type="VEuPathDB" id="HostDB:ENSG00000103018"/>
<dbReference type="eggNOG" id="KOG0537">
    <property type="taxonomic scope" value="Eukaryota"/>
</dbReference>
<dbReference type="GeneTree" id="ENSGT00940000155584"/>
<dbReference type="HOGENOM" id="CLU_102602_3_3_1"/>
<dbReference type="InParanoid" id="O43169"/>
<dbReference type="OMA" id="NTCKSYW"/>
<dbReference type="OrthoDB" id="260519at2759"/>
<dbReference type="PAN-GO" id="O43169">
    <property type="GO annotations" value="3 GO annotations based on evolutionary models"/>
</dbReference>
<dbReference type="PhylomeDB" id="O43169"/>
<dbReference type="TreeFam" id="TF314537"/>
<dbReference type="PathwayCommons" id="O43169"/>
<dbReference type="Reactome" id="R-HSA-1660661">
    <property type="pathway name" value="Sphingolipid de novo biosynthesis"/>
</dbReference>
<dbReference type="Reactome" id="R-HSA-203615">
    <property type="pathway name" value="eNOS activation"/>
</dbReference>
<dbReference type="Reactome" id="R-HSA-211945">
    <property type="pathway name" value="Phase I - Functionalization of compounds"/>
</dbReference>
<dbReference type="SignaLink" id="O43169"/>
<dbReference type="BioGRID-ORCS" id="80777">
    <property type="hits" value="177 hits in 1174 CRISPR screens"/>
</dbReference>
<dbReference type="ChiTaRS" id="CYB5B">
    <property type="organism name" value="human"/>
</dbReference>
<dbReference type="EvolutionaryTrace" id="O43169"/>
<dbReference type="GenomeRNAi" id="80777"/>
<dbReference type="Pharos" id="O43169">
    <property type="development level" value="Tbio"/>
</dbReference>
<dbReference type="PRO" id="PR:O43169"/>
<dbReference type="Proteomes" id="UP000005640">
    <property type="component" value="Chromosome 16"/>
</dbReference>
<dbReference type="RNAct" id="O43169">
    <property type="molecule type" value="protein"/>
</dbReference>
<dbReference type="Bgee" id="ENSG00000103018">
    <property type="expression patterns" value="Expressed in right adrenal gland cortex and 197 other cell types or tissues"/>
</dbReference>
<dbReference type="ExpressionAtlas" id="O43169">
    <property type="expression patterns" value="baseline and differential"/>
</dbReference>
<dbReference type="GO" id="GO:0005789">
    <property type="term" value="C:endoplasmic reticulum membrane"/>
    <property type="evidence" value="ECO:0000304"/>
    <property type="project" value="Reactome"/>
</dbReference>
<dbReference type="GO" id="GO:0043231">
    <property type="term" value="C:intracellular membrane-bounded organelle"/>
    <property type="evidence" value="ECO:0000318"/>
    <property type="project" value="GO_Central"/>
</dbReference>
<dbReference type="GO" id="GO:0016020">
    <property type="term" value="C:membrane"/>
    <property type="evidence" value="ECO:0007005"/>
    <property type="project" value="UniProtKB"/>
</dbReference>
<dbReference type="GO" id="GO:0005741">
    <property type="term" value="C:mitochondrial outer membrane"/>
    <property type="evidence" value="ECO:0000318"/>
    <property type="project" value="GO_Central"/>
</dbReference>
<dbReference type="GO" id="GO:1903958">
    <property type="term" value="C:nitric-oxide synthase complex"/>
    <property type="evidence" value="ECO:0000314"/>
    <property type="project" value="FlyBase"/>
</dbReference>
<dbReference type="GO" id="GO:0020037">
    <property type="term" value="F:heme binding"/>
    <property type="evidence" value="ECO:0000314"/>
    <property type="project" value="UniProtKB"/>
</dbReference>
<dbReference type="GO" id="GO:0046872">
    <property type="term" value="F:metal ion binding"/>
    <property type="evidence" value="ECO:0007669"/>
    <property type="project" value="UniProtKB-KW"/>
</dbReference>
<dbReference type="GO" id="GO:0006809">
    <property type="term" value="P:nitric oxide biosynthetic process"/>
    <property type="evidence" value="ECO:0000314"/>
    <property type="project" value="FlyBase"/>
</dbReference>
<dbReference type="GO" id="GO:0006979">
    <property type="term" value="P:response to oxidative stress"/>
    <property type="evidence" value="ECO:0000250"/>
    <property type="project" value="FlyBase"/>
</dbReference>
<dbReference type="GO" id="GO:0006805">
    <property type="term" value="P:xenobiotic metabolic process"/>
    <property type="evidence" value="ECO:0000250"/>
    <property type="project" value="FlyBase"/>
</dbReference>
<dbReference type="FunFam" id="3.10.120.10:FF:000002">
    <property type="entry name" value="Cytochrome b5 type B"/>
    <property type="match status" value="1"/>
</dbReference>
<dbReference type="Gene3D" id="3.10.120.10">
    <property type="entry name" value="Cytochrome b5-like heme/steroid binding domain"/>
    <property type="match status" value="1"/>
</dbReference>
<dbReference type="InterPro" id="IPR001199">
    <property type="entry name" value="Cyt_B5-like_heme/steroid-bd"/>
</dbReference>
<dbReference type="InterPro" id="IPR036400">
    <property type="entry name" value="Cyt_B5-like_heme/steroid_sf"/>
</dbReference>
<dbReference type="InterPro" id="IPR018506">
    <property type="entry name" value="Cyt_B5_heme-BS"/>
</dbReference>
<dbReference type="InterPro" id="IPR050668">
    <property type="entry name" value="Cytochrome_b5"/>
</dbReference>
<dbReference type="PANTHER" id="PTHR19359">
    <property type="entry name" value="CYTOCHROME B5"/>
    <property type="match status" value="1"/>
</dbReference>
<dbReference type="PANTHER" id="PTHR19359:SF95">
    <property type="entry name" value="CYTOCHROME B5 TYPE B"/>
    <property type="match status" value="1"/>
</dbReference>
<dbReference type="Pfam" id="PF00173">
    <property type="entry name" value="Cyt-b5"/>
    <property type="match status" value="1"/>
</dbReference>
<dbReference type="PRINTS" id="PR00363">
    <property type="entry name" value="CYTOCHROMEB5"/>
</dbReference>
<dbReference type="SMART" id="SM01117">
    <property type="entry name" value="Cyt-b5"/>
    <property type="match status" value="1"/>
</dbReference>
<dbReference type="SUPFAM" id="SSF55856">
    <property type="entry name" value="Cytochrome b5-like heme/steroid binding domain"/>
    <property type="match status" value="1"/>
</dbReference>
<dbReference type="PROSITE" id="PS00191">
    <property type="entry name" value="CYTOCHROME_B5_1"/>
    <property type="match status" value="1"/>
</dbReference>
<dbReference type="PROSITE" id="PS50255">
    <property type="entry name" value="CYTOCHROME_B5_2"/>
    <property type="match status" value="1"/>
</dbReference>
<comment type="function">
    <text evidence="1">Cytochrome b5 is a membrane-bound hemoprotein functioning as an electron carrier for several membrane-bound oxygenases.</text>
</comment>
<comment type="subunit">
    <text evidence="1">Component of a complex composed of cytochrome b5, NADH-cytochrome b5 reductase (CYB5R3) and MTARC2.</text>
</comment>
<comment type="interaction">
    <interactant intactId="EBI-1058710">
        <id>O43169</id>
    </interactant>
    <interactant intactId="EBI-12078468">
        <id>Q8IVF2-3</id>
        <label>AHNAK2</label>
    </interactant>
    <organismsDiffer>false</organismsDiffer>
    <experiments>3</experiments>
</comment>
<comment type="interaction">
    <interactant intactId="EBI-1058710">
        <id>O43169</id>
    </interactant>
    <interactant intactId="EBI-13059134">
        <id>Q13520</id>
        <label>AQP6</label>
    </interactant>
    <organismsDiffer>false</organismsDiffer>
    <experiments>3</experiments>
</comment>
<comment type="interaction">
    <interactant intactId="EBI-1058710">
        <id>O43169</id>
    </interactant>
    <interactant intactId="EBI-700794">
        <id>Q13323</id>
        <label>BIK</label>
    </interactant>
    <organismsDiffer>false</organismsDiffer>
    <experiments>3</experiments>
</comment>
<comment type="interaction">
    <interactant intactId="EBI-1058710">
        <id>O43169</id>
    </interactant>
    <interactant intactId="EBI-849893">
        <id>O60238</id>
        <label>BNIP3L</label>
    </interactant>
    <organismsDiffer>false</organismsDiffer>
    <experiments>3</experiments>
</comment>
<comment type="interaction">
    <interactant intactId="EBI-1058710">
        <id>O43169</id>
    </interactant>
    <interactant intactId="EBI-17953245">
        <id>Q6UXG8-3</id>
        <label>BTNL9</label>
    </interactant>
    <organismsDiffer>false</organismsDiffer>
    <experiments>3</experiments>
</comment>
<comment type="interaction">
    <interactant intactId="EBI-1058710">
        <id>O43169</id>
    </interactant>
    <interactant intactId="EBI-3906571">
        <id>P20138</id>
        <label>CD33</label>
    </interactant>
    <organismsDiffer>false</organismsDiffer>
    <experiments>3</experiments>
</comment>
<comment type="interaction">
    <interactant intactId="EBI-1058710">
        <id>O43169</id>
    </interactant>
    <interactant intactId="EBI-7797864">
        <id>P11912</id>
        <label>CD79A</label>
    </interactant>
    <organismsDiffer>false</organismsDiffer>
    <experiments>3</experiments>
</comment>
<comment type="interaction">
    <interactant intactId="EBI-1058710">
        <id>O43169</id>
    </interactant>
    <interactant intactId="EBI-2130213">
        <id>Q99675</id>
        <label>CGRRF1</label>
    </interactant>
    <organismsDiffer>false</organismsDiffer>
    <experiments>3</experiments>
</comment>
<comment type="interaction">
    <interactant intactId="EBI-1058710">
        <id>O43169</id>
    </interactant>
    <interactant intactId="EBI-740744">
        <id>O95471</id>
        <label>CLDN7</label>
    </interactant>
    <organismsDiffer>false</organismsDiffer>
    <experiments>3</experiments>
</comment>
<comment type="interaction">
    <interactant intactId="EBI-1058710">
        <id>O43169</id>
    </interactant>
    <interactant intactId="EBI-18013275">
        <id>Q7Z7G2</id>
        <label>CPLX4</label>
    </interactant>
    <organismsDiffer>false</organismsDiffer>
    <experiments>3</experiments>
</comment>
<comment type="interaction">
    <interactant intactId="EBI-1058710">
        <id>O43169</id>
    </interactant>
    <interactant intactId="EBI-3915253">
        <id>Q15125</id>
        <label>EBP</label>
    </interactant>
    <organismsDiffer>false</organismsDiffer>
    <experiments>3</experiments>
</comment>
<comment type="interaction">
    <interactant intactId="EBI-1058710">
        <id>O43169</id>
    </interactant>
    <interactant intactId="EBI-18304435">
        <id>Q5JX71</id>
        <label>FAM209A</label>
    </interactant>
    <organismsDiffer>false</organismsDiffer>
    <experiments>3</experiments>
</comment>
<comment type="interaction">
    <interactant intactId="EBI-1058710">
        <id>O43169</id>
    </interactant>
    <interactant intactId="EBI-18938272">
        <id>Q96KR6</id>
        <label>FAM210B</label>
    </interactant>
    <organismsDiffer>false</organismsDiffer>
    <experiments>3</experiments>
</comment>
<comment type="interaction">
    <interactant intactId="EBI-1058710">
        <id>O43169</id>
    </interactant>
    <interactant intactId="EBI-12142257">
        <id>Q8TBE3</id>
        <label>FNDC9</label>
    </interactant>
    <organismsDiffer>false</organismsDiffer>
    <experiments>3</experiments>
</comment>
<comment type="interaction">
    <interactant intactId="EBI-1058710">
        <id>O43169</id>
    </interactant>
    <interactant intactId="EBI-6911547">
        <id>A2A2Y4</id>
        <label>FRMD3</label>
    </interactant>
    <organismsDiffer>false</organismsDiffer>
    <experiments>3</experiments>
</comment>
<comment type="interaction">
    <interactant intactId="EBI-1058710">
        <id>O43169</id>
    </interactant>
    <interactant intactId="EBI-3909454">
        <id>O95377</id>
        <label>GJB5</label>
    </interactant>
    <organismsDiffer>false</organismsDiffer>
    <experiments>3</experiments>
</comment>
<comment type="interaction">
    <interactant intactId="EBI-1058710">
        <id>O43169</id>
    </interactant>
    <interactant intactId="EBI-13345167">
        <id>Q8TDT2</id>
        <label>GPR152</label>
    </interactant>
    <organismsDiffer>false</organismsDiffer>
    <experiments>3</experiments>
</comment>
<comment type="interaction">
    <interactant intactId="EBI-1058710">
        <id>O43169</id>
    </interactant>
    <interactant intactId="EBI-17451184">
        <id>Q9P2J2-2</id>
        <label>IGSF9</label>
    </interactant>
    <organismsDiffer>false</organismsDiffer>
    <experiments>3</experiments>
</comment>
<comment type="interaction">
    <interactant intactId="EBI-1058710">
        <id>O43169</id>
    </interactant>
    <interactant intactId="EBI-3934936">
        <id>O95279</id>
        <label>KCNK5</label>
    </interactant>
    <organismsDiffer>false</organismsDiffer>
    <experiments>3</experiments>
</comment>
<comment type="interaction">
    <interactant intactId="EBI-1058710">
        <id>O43169</id>
    </interactant>
    <interactant intactId="EBI-8632435">
        <id>P43628</id>
        <label>KIR2DL3</label>
    </interactant>
    <organismsDiffer>false</organismsDiffer>
    <experiments>3</experiments>
</comment>
<comment type="interaction">
    <interactant intactId="EBI-1058710">
        <id>O43169</id>
    </interactant>
    <interactant intactId="EBI-14061946">
        <id>Q5T0T0</id>
        <label>MARCHF8</label>
    </interactant>
    <organismsDiffer>false</organismsDiffer>
    <experiments>3</experiments>
</comment>
<comment type="interaction">
    <interactant intactId="EBI-1058710">
        <id>O43169</id>
    </interactant>
    <interactant intactId="EBI-11956541">
        <id>Q9GZY8-5</id>
        <label>MFF</label>
    </interactant>
    <organismsDiffer>false</organismsDiffer>
    <experiments>3</experiments>
</comment>
<comment type="interaction">
    <interactant intactId="EBI-1058710">
        <id>O43169</id>
    </interactant>
    <interactant intactId="EBI-373355">
        <id>Q5SR56</id>
        <label>MFSD14B</label>
    </interactant>
    <organismsDiffer>false</organismsDiffer>
    <experiments>3</experiments>
</comment>
<comment type="interaction">
    <interactant intactId="EBI-1058710">
        <id>O43169</id>
    </interactant>
    <interactant intactId="EBI-11922631">
        <id>Q5TF39</id>
        <label>MFSD4B</label>
    </interactant>
    <organismsDiffer>false</organismsDiffer>
    <experiments>3</experiments>
</comment>
<comment type="interaction">
    <interactant intactId="EBI-1058710">
        <id>O43169</id>
    </interactant>
    <interactant intactId="EBI-3920969">
        <id>Q6N075</id>
        <label>MFSD5</label>
    </interactant>
    <organismsDiffer>false</organismsDiffer>
    <experiments>3</experiments>
</comment>
<comment type="interaction">
    <interactant intactId="EBI-1058710">
        <id>O43169</id>
    </interactant>
    <interactant intactId="EBI-17263240">
        <id>P15941-11</id>
        <label>MUC1</label>
    </interactant>
    <organismsDiffer>false</organismsDiffer>
    <experiments>3</experiments>
</comment>
<comment type="interaction">
    <interactant intactId="EBI-1058710">
        <id>O43169</id>
    </interactant>
    <interactant intactId="EBI-2682365">
        <id>Q8N183</id>
        <label>NDUFAF2</label>
    </interactant>
    <organismsDiffer>false</organismsDiffer>
    <experiments>3</experiments>
</comment>
<comment type="interaction">
    <interactant intactId="EBI-1058710">
        <id>O43169</id>
    </interactant>
    <interactant intactId="EBI-716063">
        <id>Q13113</id>
        <label>PDZK1IP1</label>
    </interactant>
    <organismsDiffer>false</organismsDiffer>
    <experiments>3</experiments>
</comment>
<comment type="interaction">
    <interactant intactId="EBI-1058710">
        <id>O43169</id>
    </interactant>
    <interactant intactId="EBI-717068">
        <id>Q96KR7</id>
        <label>PHACTR3</label>
    </interactant>
    <organismsDiffer>false</organismsDiffer>
    <experiments>3</experiments>
</comment>
<comment type="interaction">
    <interactant intactId="EBI-1058710">
        <id>O43169</id>
    </interactant>
    <interactant intactId="EBI-10485931">
        <id>Q5VZY2</id>
        <label>PLPP4</label>
    </interactant>
    <organismsDiffer>false</organismsDiffer>
    <experiments>3</experiments>
</comment>
<comment type="interaction">
    <interactant intactId="EBI-1058710">
        <id>O43169</id>
    </interactant>
    <interactant intactId="EBI-7545592">
        <id>Q9H6H4</id>
        <label>REEP4</label>
    </interactant>
    <organismsDiffer>false</organismsDiffer>
    <experiments>3</experiments>
</comment>
<comment type="interaction">
    <interactant intactId="EBI-1058710">
        <id>O43169</id>
    </interactant>
    <interactant intactId="EBI-10192441">
        <id>Q86VR2</id>
        <label>RETREG3</label>
    </interactant>
    <organismsDiffer>false</organismsDiffer>
    <experiments>3</experiments>
</comment>
<comment type="interaction">
    <interactant intactId="EBI-1058710">
        <id>O43169</id>
    </interactant>
    <interactant intactId="EBI-16769525">
        <id>Q5VUM1</id>
        <label>SDHAF4</label>
    </interactant>
    <organismsDiffer>false</organismsDiffer>
    <experiments>3</experiments>
</comment>
<comment type="interaction">
    <interactant intactId="EBI-1058710">
        <id>O43169</id>
    </interactant>
    <interactant intactId="EBI-18159983">
        <id>Q3KNW5</id>
        <label>SLC10A6</label>
    </interactant>
    <organismsDiffer>false</organismsDiffer>
    <experiments>3</experiments>
</comment>
<comment type="interaction">
    <interactant intactId="EBI-1058710">
        <id>O43169</id>
    </interactant>
    <interactant intactId="EBI-2823239">
        <id>Q9NUM3</id>
        <label>SLC39A9</label>
    </interactant>
    <organismsDiffer>false</organismsDiffer>
    <experiments>3</experiments>
</comment>
<comment type="interaction">
    <interactant intactId="EBI-1058710">
        <id>O43169</id>
    </interactant>
    <interactant intactId="EBI-1211440">
        <id>P27105</id>
        <label>STOM</label>
    </interactant>
    <organismsDiffer>false</organismsDiffer>
    <experiments>3</experiments>
</comment>
<comment type="interaction">
    <interactant intactId="EBI-1058710">
        <id>O43169</id>
    </interactant>
    <interactant intactId="EBI-712466">
        <id>Q16623</id>
        <label>STX1A</label>
    </interactant>
    <organismsDiffer>false</organismsDiffer>
    <experiments>3</experiments>
</comment>
<comment type="interaction">
    <interactant intactId="EBI-1058710">
        <id>O43169</id>
    </interactant>
    <interactant intactId="EBI-524909">
        <id>P21579</id>
        <label>SYT1</label>
    </interactant>
    <organismsDiffer>false</organismsDiffer>
    <experiments>3</experiments>
</comment>
<comment type="interaction">
    <interactant intactId="EBI-1058710">
        <id>O43169</id>
    </interactant>
    <interactant intactId="EBI-7238458">
        <id>Q8IV31</id>
        <label>TMEM139</label>
    </interactant>
    <organismsDiffer>false</organismsDiffer>
    <experiments>3</experiments>
</comment>
<comment type="interaction">
    <interactant intactId="EBI-1058710">
        <id>O43169</id>
    </interactant>
    <interactant intactId="EBI-10982110">
        <id>Q96Q45-2</id>
        <label>TMEM237</label>
    </interactant>
    <organismsDiffer>false</organismsDiffer>
    <experiments>3</experiments>
</comment>
<comment type="interaction">
    <interactant intactId="EBI-1058710">
        <id>O43169</id>
    </interactant>
    <interactant intactId="EBI-11722971">
        <id>Q53FP2</id>
        <label>TMEM35A</label>
    </interactant>
    <organismsDiffer>false</organismsDiffer>
    <experiments>3</experiments>
</comment>
<comment type="interaction">
    <interactant intactId="EBI-1058710">
        <id>O43169</id>
    </interactant>
    <interactant intactId="EBI-10288884">
        <id>Q96HV5</id>
        <label>TMEM41A</label>
    </interactant>
    <organismsDiffer>false</organismsDiffer>
    <experiments>3</experiments>
</comment>
<comment type="interaction">
    <interactant intactId="EBI-1058710">
        <id>O43169</id>
    </interactant>
    <interactant intactId="EBI-2548832">
        <id>Q8N661</id>
        <label>TMEM86B</label>
    </interactant>
    <organismsDiffer>false</organismsDiffer>
    <experiments>3</experiments>
</comment>
<comment type="interaction">
    <interactant intactId="EBI-1058710">
        <id>O43169</id>
    </interactant>
    <interactant intactId="EBI-6928570">
        <id>PRO_0000045601</id>
        <dbReference type="UniProtKB" id="Q99IB8"/>
    </interactant>
    <organismsDiffer>true</organismsDiffer>
    <experiments>5</experiments>
</comment>
<comment type="subcellular location">
    <subcellularLocation>
        <location evidence="2">Mitochondrion outer membrane</location>
    </subcellularLocation>
</comment>
<comment type="similarity">
    <text evidence="7">Belongs to the cytochrome b5 family.</text>
</comment>
<comment type="caution">
    <text evidence="7">It is uncertain whether Met-1 or Met-5 is the initiator.</text>
</comment>
<comment type="sequence caution" evidence="7">
    <conflict type="erroneous initiation">
        <sequence resource="EMBL-CDS" id="AAH04373"/>
    </conflict>
    <text>Truncated N-terminus.</text>
</comment>
<comment type="sequence caution" evidence="7">
    <conflict type="erroneous initiation">
        <sequence resource="EMBL-CDS" id="AAH14431"/>
    </conflict>
    <text>Truncated N-terminus.</text>
</comment>
<comment type="sequence caution" evidence="7">
    <conflict type="erroneous initiation">
        <sequence resource="EMBL-CDS" id="BAA23735"/>
    </conflict>
    <text>Truncated N-terminus.</text>
</comment>
<comment type="sequence caution" evidence="7">
    <conflict type="erroneous initiation">
        <sequence resource="EMBL-CDS" id="BAF84265"/>
    </conflict>
    <text>Truncated N-terminus.</text>
</comment>
<organism>
    <name type="scientific">Homo sapiens</name>
    <name type="common">Human</name>
    <dbReference type="NCBI Taxonomy" id="9606"/>
    <lineage>
        <taxon>Eukaryota</taxon>
        <taxon>Metazoa</taxon>
        <taxon>Chordata</taxon>
        <taxon>Craniata</taxon>
        <taxon>Vertebrata</taxon>
        <taxon>Euteleostomi</taxon>
        <taxon>Mammalia</taxon>
        <taxon>Eutheria</taxon>
        <taxon>Euarchontoglires</taxon>
        <taxon>Primates</taxon>
        <taxon>Haplorrhini</taxon>
        <taxon>Catarrhini</taxon>
        <taxon>Hominidae</taxon>
        <taxon>Homo</taxon>
    </lineage>
</organism>